<sequence length="245" mass="25639">MREALRSLLVALQFLTRLPVRLSAMPTPEQFGRAVLCYPLVGVLIGVVLYAAARSLDGTPPLLQAALLLSLWVALSGALHLDGLADMADAWVGGLGDRERTLAIMKDPRSGPVAVVVLVLVLLLKFSALAALLGQGEAGLLPLAPWLARSSLPLLFLTTPYARPGGLGQAIAEHLPARSLPWVLGVSFGLALAFGLAGLLALLVTLMLFAWLRSRFLARLGGTTGDTAGALVELTECAVLVALAL</sequence>
<protein>
    <recommendedName>
        <fullName evidence="1">Adenosylcobinamide-GDP ribazoletransferase</fullName>
        <ecNumber evidence="1">2.7.8.26</ecNumber>
    </recommendedName>
    <alternativeName>
        <fullName evidence="1">Cobalamin synthase</fullName>
    </alternativeName>
    <alternativeName>
        <fullName evidence="1">Cobalamin-5'-phosphate synthase</fullName>
    </alternativeName>
</protein>
<comment type="function">
    <text evidence="1">Joins adenosylcobinamide-GDP and alpha-ribazole to generate adenosylcobalamin (Ado-cobalamin). Also synthesizes adenosylcobalamin 5'-phosphate from adenosylcobinamide-GDP and alpha-ribazole 5'-phosphate.</text>
</comment>
<comment type="catalytic activity">
    <reaction evidence="1">
        <text>alpha-ribazole + adenosylcob(III)inamide-GDP = adenosylcob(III)alamin + GMP + H(+)</text>
        <dbReference type="Rhea" id="RHEA:16049"/>
        <dbReference type="ChEBI" id="CHEBI:10329"/>
        <dbReference type="ChEBI" id="CHEBI:15378"/>
        <dbReference type="ChEBI" id="CHEBI:18408"/>
        <dbReference type="ChEBI" id="CHEBI:58115"/>
        <dbReference type="ChEBI" id="CHEBI:60487"/>
        <dbReference type="EC" id="2.7.8.26"/>
    </reaction>
</comment>
<comment type="catalytic activity">
    <reaction evidence="1">
        <text>alpha-ribazole 5'-phosphate + adenosylcob(III)inamide-GDP = adenosylcob(III)alamin 5'-phosphate + GMP + H(+)</text>
        <dbReference type="Rhea" id="RHEA:23560"/>
        <dbReference type="ChEBI" id="CHEBI:15378"/>
        <dbReference type="ChEBI" id="CHEBI:57918"/>
        <dbReference type="ChEBI" id="CHEBI:58115"/>
        <dbReference type="ChEBI" id="CHEBI:60487"/>
        <dbReference type="ChEBI" id="CHEBI:60493"/>
        <dbReference type="EC" id="2.7.8.26"/>
    </reaction>
</comment>
<comment type="cofactor">
    <cofactor evidence="1">
        <name>Mg(2+)</name>
        <dbReference type="ChEBI" id="CHEBI:18420"/>
    </cofactor>
</comment>
<comment type="pathway">
    <text evidence="1">Cofactor biosynthesis; adenosylcobalamin biosynthesis; adenosylcobalamin from cob(II)yrinate a,c-diamide: step 7/7.</text>
</comment>
<comment type="subcellular location">
    <subcellularLocation>
        <location evidence="1">Cell inner membrane</location>
        <topology evidence="1">Multi-pass membrane protein</topology>
    </subcellularLocation>
</comment>
<comment type="similarity">
    <text evidence="1">Belongs to the CobS family.</text>
</comment>
<name>COBS_PSEAE</name>
<evidence type="ECO:0000255" key="1">
    <source>
        <dbReference type="HAMAP-Rule" id="MF_00719"/>
    </source>
</evidence>
<dbReference type="EC" id="2.7.8.26" evidence="1"/>
<dbReference type="EMBL" id="AE004091">
    <property type="protein sequence ID" value="AAG04670.1"/>
    <property type="molecule type" value="Genomic_DNA"/>
</dbReference>
<dbReference type="PIR" id="G83486">
    <property type="entry name" value="G83486"/>
</dbReference>
<dbReference type="RefSeq" id="WP_003086787.1">
    <property type="nucleotide sequence ID" value="NZ_QZGE01000005.1"/>
</dbReference>
<dbReference type="FunCoup" id="Q9I463">
    <property type="interactions" value="251"/>
</dbReference>
<dbReference type="STRING" id="208964.PA1281"/>
<dbReference type="PaxDb" id="208964-PA1281"/>
<dbReference type="DNASU" id="881439"/>
<dbReference type="KEGG" id="pae:PA1281"/>
<dbReference type="PATRIC" id="fig|208964.12.peg.1331"/>
<dbReference type="PseudoCAP" id="PA1281"/>
<dbReference type="HOGENOM" id="CLU_057426_3_1_6"/>
<dbReference type="InParanoid" id="Q9I463"/>
<dbReference type="OrthoDB" id="9794626at2"/>
<dbReference type="PhylomeDB" id="Q9I463"/>
<dbReference type="BioCyc" id="PAER208964:G1FZ6-1306-MONOMER"/>
<dbReference type="UniPathway" id="UPA00148">
    <property type="reaction ID" value="UER00238"/>
</dbReference>
<dbReference type="Proteomes" id="UP000002438">
    <property type="component" value="Chromosome"/>
</dbReference>
<dbReference type="GO" id="GO:0005886">
    <property type="term" value="C:plasma membrane"/>
    <property type="evidence" value="ECO:0007669"/>
    <property type="project" value="UniProtKB-SubCell"/>
</dbReference>
<dbReference type="GO" id="GO:0051073">
    <property type="term" value="F:adenosylcobinamide-GDP ribazoletransferase activity"/>
    <property type="evidence" value="ECO:0007669"/>
    <property type="project" value="UniProtKB-UniRule"/>
</dbReference>
<dbReference type="GO" id="GO:0008818">
    <property type="term" value="F:cobalamin 5'-phosphate synthase activity"/>
    <property type="evidence" value="ECO:0007669"/>
    <property type="project" value="UniProtKB-UniRule"/>
</dbReference>
<dbReference type="GO" id="GO:0009236">
    <property type="term" value="P:cobalamin biosynthetic process"/>
    <property type="evidence" value="ECO:0000318"/>
    <property type="project" value="GO_Central"/>
</dbReference>
<dbReference type="HAMAP" id="MF_00719">
    <property type="entry name" value="CobS"/>
    <property type="match status" value="1"/>
</dbReference>
<dbReference type="InterPro" id="IPR003805">
    <property type="entry name" value="CobS"/>
</dbReference>
<dbReference type="NCBIfam" id="TIGR00317">
    <property type="entry name" value="cobS"/>
    <property type="match status" value="1"/>
</dbReference>
<dbReference type="NCBIfam" id="NF001278">
    <property type="entry name" value="PRK00235.1-5"/>
    <property type="match status" value="1"/>
</dbReference>
<dbReference type="PANTHER" id="PTHR34148">
    <property type="entry name" value="ADENOSYLCOBINAMIDE-GDP RIBAZOLETRANSFERASE"/>
    <property type="match status" value="1"/>
</dbReference>
<dbReference type="PANTHER" id="PTHR34148:SF1">
    <property type="entry name" value="ADENOSYLCOBINAMIDE-GDP RIBAZOLETRANSFERASE"/>
    <property type="match status" value="1"/>
</dbReference>
<dbReference type="Pfam" id="PF02654">
    <property type="entry name" value="CobS"/>
    <property type="match status" value="1"/>
</dbReference>
<organism>
    <name type="scientific">Pseudomonas aeruginosa (strain ATCC 15692 / DSM 22644 / CIP 104116 / JCM 14847 / LMG 12228 / 1C / PRS 101 / PAO1)</name>
    <dbReference type="NCBI Taxonomy" id="208964"/>
    <lineage>
        <taxon>Bacteria</taxon>
        <taxon>Pseudomonadati</taxon>
        <taxon>Pseudomonadota</taxon>
        <taxon>Gammaproteobacteria</taxon>
        <taxon>Pseudomonadales</taxon>
        <taxon>Pseudomonadaceae</taxon>
        <taxon>Pseudomonas</taxon>
    </lineage>
</organism>
<accession>Q9I463</accession>
<gene>
    <name evidence="1" type="primary">cobS</name>
    <name type="ordered locus">PA1281</name>
</gene>
<proteinExistence type="inferred from homology"/>
<feature type="chain" id="PRO_0000146887" description="Adenosylcobinamide-GDP ribazoletransferase">
    <location>
        <begin position="1"/>
        <end position="245"/>
    </location>
</feature>
<feature type="transmembrane region" description="Helical" evidence="1">
    <location>
        <begin position="31"/>
        <end position="51"/>
    </location>
</feature>
<feature type="transmembrane region" description="Helical" evidence="1">
    <location>
        <begin position="61"/>
        <end position="81"/>
    </location>
</feature>
<feature type="transmembrane region" description="Helical" evidence="1">
    <location>
        <begin position="113"/>
        <end position="133"/>
    </location>
</feature>
<feature type="transmembrane region" description="Helical" evidence="1">
    <location>
        <begin position="138"/>
        <end position="158"/>
    </location>
</feature>
<feature type="transmembrane region" description="Helical" evidence="1">
    <location>
        <begin position="192"/>
        <end position="212"/>
    </location>
</feature>
<reference key="1">
    <citation type="journal article" date="2000" name="Nature">
        <title>Complete genome sequence of Pseudomonas aeruginosa PAO1, an opportunistic pathogen.</title>
        <authorList>
            <person name="Stover C.K."/>
            <person name="Pham X.-Q.T."/>
            <person name="Erwin A.L."/>
            <person name="Mizoguchi S.D."/>
            <person name="Warrener P."/>
            <person name="Hickey M.J."/>
            <person name="Brinkman F.S.L."/>
            <person name="Hufnagle W.O."/>
            <person name="Kowalik D.J."/>
            <person name="Lagrou M."/>
            <person name="Garber R.L."/>
            <person name="Goltry L."/>
            <person name="Tolentino E."/>
            <person name="Westbrock-Wadman S."/>
            <person name="Yuan Y."/>
            <person name="Brody L.L."/>
            <person name="Coulter S.N."/>
            <person name="Folger K.R."/>
            <person name="Kas A."/>
            <person name="Larbig K."/>
            <person name="Lim R.M."/>
            <person name="Smith K.A."/>
            <person name="Spencer D.H."/>
            <person name="Wong G.K.-S."/>
            <person name="Wu Z."/>
            <person name="Paulsen I.T."/>
            <person name="Reizer J."/>
            <person name="Saier M.H. Jr."/>
            <person name="Hancock R.E.W."/>
            <person name="Lory S."/>
            <person name="Olson M.V."/>
        </authorList>
    </citation>
    <scope>NUCLEOTIDE SEQUENCE [LARGE SCALE GENOMIC DNA]</scope>
    <source>
        <strain>ATCC 15692 / DSM 22644 / CIP 104116 / JCM 14847 / LMG 12228 / 1C / PRS 101 / PAO1</strain>
    </source>
</reference>
<keyword id="KW-0997">Cell inner membrane</keyword>
<keyword id="KW-1003">Cell membrane</keyword>
<keyword id="KW-0169">Cobalamin biosynthesis</keyword>
<keyword id="KW-0460">Magnesium</keyword>
<keyword id="KW-0472">Membrane</keyword>
<keyword id="KW-1185">Reference proteome</keyword>
<keyword id="KW-0808">Transferase</keyword>
<keyword id="KW-0812">Transmembrane</keyword>
<keyword id="KW-1133">Transmembrane helix</keyword>